<feature type="signal peptide" evidence="1">
    <location>
        <begin position="1"/>
        <end position="24"/>
    </location>
</feature>
<feature type="chain" id="PRO_0000038250" description="Envelope glycoprotein H" evidence="1">
    <location>
        <begin position="25"/>
        <end position="686"/>
    </location>
</feature>
<feature type="topological domain" description="Virion surface" evidence="1">
    <location>
        <begin position="25"/>
        <end position="646"/>
    </location>
</feature>
<feature type="transmembrane region" description="Helical" evidence="1">
    <location>
        <begin position="647"/>
        <end position="667"/>
    </location>
</feature>
<feature type="topological domain" description="Intravirion" evidence="1">
    <location>
        <begin position="668"/>
        <end position="686"/>
    </location>
</feature>
<feature type="region of interest" description="Interaction with gL" evidence="1">
    <location>
        <begin position="157"/>
        <end position="217"/>
    </location>
</feature>
<feature type="glycosylation site" description="N-linked (GlcNAc...) asparagine; by host" evidence="1">
    <location>
        <position position="77"/>
    </location>
</feature>
<feature type="glycosylation site" description="N-linked (GlcNAc...) asparagine; by host" evidence="1">
    <location>
        <position position="162"/>
    </location>
</feature>
<feature type="glycosylation site" description="N-linked (GlcNAc...) asparagine; by host" evidence="1">
    <location>
        <position position="542"/>
    </location>
</feature>
<feature type="glycosylation site" description="N-linked (GlcNAc...) asparagine; by host" evidence="1">
    <location>
        <position position="604"/>
    </location>
</feature>
<feature type="glycosylation site" description="N-linked (GlcNAc...) asparagine; by host" evidence="1">
    <location>
        <position position="627"/>
    </location>
</feature>
<name>GH_SUHVN</name>
<accession>Q00660</accession>
<protein>
    <recommendedName>
        <fullName evidence="1">Envelope glycoprotein H</fullName>
        <shortName evidence="1">gH</shortName>
    </recommendedName>
</protein>
<keyword id="KW-1169">Fusion of virus membrane with host cell membrane</keyword>
<keyword id="KW-1168">Fusion of virus membrane with host membrane</keyword>
<keyword id="KW-0325">Glycoprotein</keyword>
<keyword id="KW-1032">Host cell membrane</keyword>
<keyword id="KW-1039">Host endosome</keyword>
<keyword id="KW-1043">Host membrane</keyword>
<keyword id="KW-0472">Membrane</keyword>
<keyword id="KW-0730">Sialic acid</keyword>
<keyword id="KW-0732">Signal</keyword>
<keyword id="KW-0812">Transmembrane</keyword>
<keyword id="KW-1133">Transmembrane helix</keyword>
<keyword id="KW-0261">Viral envelope protein</keyword>
<keyword id="KW-1162">Viral penetration into host cytoplasm</keyword>
<keyword id="KW-0946">Virion</keyword>
<keyword id="KW-1160">Virus entry into host cell</keyword>
<proteinExistence type="inferred from homology"/>
<organismHost>
    <name type="scientific">Sus scrofa</name>
    <name type="common">Pig</name>
    <dbReference type="NCBI Taxonomy" id="9823"/>
</organismHost>
<gene>
    <name evidence="1" type="primary">gH</name>
</gene>
<evidence type="ECO:0000255" key="1">
    <source>
        <dbReference type="HAMAP-Rule" id="MF_04033"/>
    </source>
</evidence>
<comment type="function">
    <text evidence="1">The heterodimer glycoprotein H-glycoprotein L is required for the fusion of viral and plasma membranes leading to virus entry into the host cell. Following initial binding to host receptor, membrane fusion is mediated by the fusion machinery composed of gB and the heterodimer gH/gL. May also be involved in the fusion between the virion envelope and the outer nuclear membrane during virion morphogenesis.</text>
</comment>
<comment type="subunit">
    <text evidence="1">Interacts with glycoprotein L (gL); this interaction is necessary for the correct processing and cell surface expression of gH. The heterodimer gH/gL seems to interact with gB trimers during fusion.</text>
</comment>
<comment type="subcellular location">
    <subcellularLocation>
        <location evidence="1">Virion membrane</location>
        <topology evidence="1">Single-pass type I membrane protein</topology>
    </subcellularLocation>
    <subcellularLocation>
        <location evidence="1">Host cell membrane</location>
        <topology evidence="1">Single-pass type I membrane protein</topology>
    </subcellularLocation>
    <subcellularLocation>
        <location evidence="1">Host endosome membrane</location>
        <topology evidence="1">Single-pass type I membrane protein</topology>
    </subcellularLocation>
    <text evidence="1">During virion morphogenesis, this protein probably accumulates in the endosomes and trans-Golgi where secondary envelopment occurs. It is probably transported to the cell surface from where it is endocytosed and directed to the trans-Golgi network (TGN).</text>
</comment>
<comment type="PTM">
    <text evidence="1">N-glycosylated, O-glycosylated, and sialylated.</text>
</comment>
<comment type="similarity">
    <text evidence="1">Belongs to the herpesviridae glycoprotein H family.</text>
</comment>
<reference key="1">
    <citation type="journal article" date="1992" name="J. Virol.">
        <title>Glycoprotein H of pseudorabies virus is essential for entry and cell-to-cell spread of the virus.</title>
        <authorList>
            <person name="Peeters B."/>
            <person name="Dewind N."/>
            <person name="Broer R."/>
            <person name="Gielkens A."/>
            <person name="Moorman R."/>
        </authorList>
    </citation>
    <scope>NUCLEOTIDE SEQUENCE [GENOMIC DNA]</scope>
</reference>
<organism>
    <name type="scientific">Suid herpesvirus 1 (strain NIA-3)</name>
    <name type="common">SuHV-1</name>
    <name type="synonym">Pseudorabies virus (strain NIA-3)</name>
    <dbReference type="NCBI Taxonomy" id="10349"/>
    <lineage>
        <taxon>Viruses</taxon>
        <taxon>Duplodnaviria</taxon>
        <taxon>Heunggongvirae</taxon>
        <taxon>Peploviricota</taxon>
        <taxon>Herviviricetes</taxon>
        <taxon>Herpesvirales</taxon>
        <taxon>Orthoherpesviridae</taxon>
        <taxon>Alphaherpesvirinae</taxon>
        <taxon>Varicellovirus</taxon>
        <taxon>Varicellovirus suidalpha1</taxon>
        <taxon>Suid herpesvirus 1</taxon>
    </lineage>
</organism>
<dbReference type="EMBL" id="X61696">
    <property type="protein sequence ID" value="CAA43862.1"/>
    <property type="molecule type" value="Genomic_DNA"/>
</dbReference>
<dbReference type="PIR" id="A42000">
    <property type="entry name" value="VGBENA"/>
</dbReference>
<dbReference type="SMR" id="Q00660"/>
<dbReference type="GlyCosmos" id="Q00660">
    <property type="glycosylation" value="5 sites, No reported glycans"/>
</dbReference>
<dbReference type="GO" id="GO:0044175">
    <property type="term" value="C:host cell endosome membrane"/>
    <property type="evidence" value="ECO:0007669"/>
    <property type="project" value="UniProtKB-SubCell"/>
</dbReference>
<dbReference type="GO" id="GO:0020002">
    <property type="term" value="C:host cell plasma membrane"/>
    <property type="evidence" value="ECO:0007669"/>
    <property type="project" value="UniProtKB-SubCell"/>
</dbReference>
<dbReference type="GO" id="GO:0016020">
    <property type="term" value="C:membrane"/>
    <property type="evidence" value="ECO:0007669"/>
    <property type="project" value="UniProtKB-KW"/>
</dbReference>
<dbReference type="GO" id="GO:0019031">
    <property type="term" value="C:viral envelope"/>
    <property type="evidence" value="ECO:0007669"/>
    <property type="project" value="UniProtKB-KW"/>
</dbReference>
<dbReference type="GO" id="GO:0055036">
    <property type="term" value="C:virion membrane"/>
    <property type="evidence" value="ECO:0007669"/>
    <property type="project" value="UniProtKB-SubCell"/>
</dbReference>
<dbReference type="GO" id="GO:0019064">
    <property type="term" value="P:fusion of virus membrane with host plasma membrane"/>
    <property type="evidence" value="ECO:0007669"/>
    <property type="project" value="UniProtKB-KW"/>
</dbReference>
<dbReference type="GO" id="GO:0046718">
    <property type="term" value="P:symbiont entry into host cell"/>
    <property type="evidence" value="ECO:0007669"/>
    <property type="project" value="UniProtKB-KW"/>
</dbReference>
<dbReference type="Gene3D" id="1.20.58.1340">
    <property type="match status" value="1"/>
</dbReference>
<dbReference type="Gene3D" id="3.30.500.50">
    <property type="match status" value="1"/>
</dbReference>
<dbReference type="Gene3D" id="2.60.40.3190">
    <property type="entry name" value="Herpesvirus glycoprotein H, C-terminal domain"/>
    <property type="match status" value="1"/>
</dbReference>
<dbReference type="HAMAP" id="MF_04033">
    <property type="entry name" value="HSV_GH"/>
    <property type="match status" value="1"/>
</dbReference>
<dbReference type="InterPro" id="IPR003493">
    <property type="entry name" value="Herpes_gH"/>
</dbReference>
<dbReference type="InterPro" id="IPR035305">
    <property type="entry name" value="Herpes_glycoH_C"/>
</dbReference>
<dbReference type="InterPro" id="IPR038172">
    <property type="entry name" value="Herpes_glycoH_C_sf"/>
</dbReference>
<dbReference type="Pfam" id="PF17488">
    <property type="entry name" value="Herpes_glycoH_C"/>
    <property type="match status" value="1"/>
</dbReference>
<sequence length="686" mass="71833">MPASSVRLPLRLLTLAGLLALAGAAALARGAPQGGPPSPQGGPAPTAAPARGPTLFVLVGDGSARFVFQLGGLGALNDTRIRGHLLGRYLVSYQVVPPPVSAWYFVQRPRERPRLSGPPSGAELVAFDAPGVRRTYTTAAVWPAEVAVLADAEARCPAAVFNVTLGEAFLGLRVALRSFLPLEVIISAERMRMIAPPALGADLEPPGPPAGRFHVYTLGFLSDGAMHQTMRDVAAYVHESDDYLAQLSAAHAAALAAVVQPGPYYFYRAAVRLGVAAFVFSEAARRDRRASAPALLRVESDARLLSRLLMRAAGCPAGFAGLFDGRAERVPVAPADQLRAAWTFGEDPAPRLDLARATVAEAYRRSVRGKPFDQQALFFAVALLLRAGGPGDARETLLRTTAMCTAERAAAAAELTRAALSPTAAWNEPFSLLDVLSPCAVSLRRDLGGDATLANLGAAARLALAPAGAPGAAAATDGGAEEEEEDPVARAAPEIPAEALLALPLRGGASFVFTRRRPDCGPAYTLGGVDIANPLVLALVSNDSAACDYTDRMPESQHLPATDNPSVCVYCDCVFVRYSSAGTILETVLIESKDMEEQLMAGANSTIPSFNPTLHGGDVKALMLFPNGTVVDLLSFTSTRLAPVSPAYVVASVVGAAITVGILYALFKMLCSFSSEGYSRLINARS</sequence>